<protein>
    <recommendedName>
        <fullName evidence="1">Glutamate-1-semialdehyde 2,1-aminomutase</fullName>
        <shortName evidence="1">GSA</shortName>
        <ecNumber evidence="1">5.4.3.8</ecNumber>
    </recommendedName>
    <alternativeName>
        <fullName evidence="1">Glutamate-1-semialdehyde aminotransferase</fullName>
        <shortName evidence="1">GSA-AT</shortName>
    </alternativeName>
</protein>
<feature type="chain" id="PRO_0000120460" description="Glutamate-1-semialdehyde 2,1-aminomutase">
    <location>
        <begin position="1"/>
        <end position="437"/>
    </location>
</feature>
<feature type="modified residue" description="N6-(pyridoxal phosphate)lysine" evidence="1">
    <location>
        <position position="277"/>
    </location>
</feature>
<feature type="strand" evidence="3">
    <location>
        <begin position="48"/>
        <end position="53"/>
    </location>
</feature>
<feature type="strand" evidence="3">
    <location>
        <begin position="55"/>
        <end position="58"/>
    </location>
</feature>
<feature type="strand" evidence="3">
    <location>
        <begin position="63"/>
        <end position="68"/>
    </location>
</feature>
<feature type="turn" evidence="3">
    <location>
        <begin position="69"/>
        <end position="73"/>
    </location>
</feature>
<feature type="helix" evidence="3">
    <location>
        <begin position="81"/>
        <end position="91"/>
    </location>
</feature>
<feature type="helix" evidence="3">
    <location>
        <begin position="102"/>
        <end position="114"/>
    </location>
</feature>
<feature type="strand" evidence="3">
    <location>
        <begin position="119"/>
        <end position="126"/>
    </location>
</feature>
<feature type="helix" evidence="3">
    <location>
        <begin position="127"/>
        <end position="142"/>
    </location>
</feature>
<feature type="strand" evidence="3">
    <location>
        <begin position="146"/>
        <end position="151"/>
    </location>
</feature>
<feature type="strand" evidence="3">
    <location>
        <begin position="188"/>
        <end position="192"/>
    </location>
</feature>
<feature type="helix" evidence="3">
    <location>
        <begin position="196"/>
        <end position="205"/>
    </location>
</feature>
<feature type="turn" evidence="3">
    <location>
        <begin position="207"/>
        <end position="209"/>
    </location>
</feature>
<feature type="strand" evidence="3">
    <location>
        <begin position="210"/>
        <end position="215"/>
    </location>
</feature>
<feature type="strand" evidence="3">
    <location>
        <begin position="217"/>
        <end position="219"/>
    </location>
</feature>
<feature type="strand" evidence="3">
    <location>
        <begin position="221"/>
        <end position="223"/>
    </location>
</feature>
<feature type="helix" evidence="3">
    <location>
        <begin position="231"/>
        <end position="241"/>
    </location>
</feature>
<feature type="strand" evidence="3">
    <location>
        <begin position="245"/>
        <end position="250"/>
    </location>
</feature>
<feature type="turn" evidence="3">
    <location>
        <begin position="251"/>
        <end position="256"/>
    </location>
</feature>
<feature type="helix" evidence="3">
    <location>
        <begin position="261"/>
        <end position="266"/>
    </location>
</feature>
<feature type="strand" evidence="3">
    <location>
        <begin position="271"/>
        <end position="275"/>
    </location>
</feature>
<feature type="helix" evidence="3">
    <location>
        <begin position="277"/>
        <end position="280"/>
    </location>
</feature>
<feature type="strand" evidence="3">
    <location>
        <begin position="286"/>
        <end position="290"/>
    </location>
</feature>
<feature type="helix" evidence="3">
    <location>
        <begin position="292"/>
        <end position="295"/>
    </location>
</feature>
<feature type="helix" evidence="3">
    <location>
        <begin position="314"/>
        <end position="327"/>
    </location>
</feature>
<feature type="helix" evidence="3">
    <location>
        <begin position="332"/>
        <end position="352"/>
    </location>
</feature>
<feature type="turn" evidence="3">
    <location>
        <begin position="353"/>
        <end position="355"/>
    </location>
</feature>
<feature type="strand" evidence="3">
    <location>
        <begin position="359"/>
        <end position="363"/>
    </location>
</feature>
<feature type="strand" evidence="3">
    <location>
        <begin position="366"/>
        <end position="373"/>
    </location>
</feature>
<feature type="helix" evidence="3">
    <location>
        <begin position="379"/>
        <end position="382"/>
    </location>
</feature>
<feature type="helix" evidence="3">
    <location>
        <begin position="387"/>
        <end position="399"/>
    </location>
</feature>
<feature type="helix" evidence="3">
    <location>
        <begin position="420"/>
        <end position="434"/>
    </location>
</feature>
<accession>Q8DLK8</accession>
<gene>
    <name evidence="1" type="primary">hemL</name>
    <name type="ordered locus">tlr0479</name>
</gene>
<sequence>MRELTLTTTVFQTTKSQEIFAAAQKLMPGGVSSPVRAFKSVGGQPIVFDHVKGAHIWDVDGNQYIDYVGSWGPAIVGHAHPEVIDALHAALEKGTSFGAPCLLENILAEMVIAAVPSVEMVRFVNSGTEACMAVLRLMRAYTQREKVIKFEGCYHGHADMFLVKAGSGVATLGLPDSPGVPKATTAATLTAPYNDLEAVSRLFEQYPNDIAGVILEPVVGNAGFIPPDAGFLEGLRELTKQYGALLVFDEVMTGFRIAYGGAQEKFGVTPDLTTLGKVIGGGLPVGAYGGRAEIMKMVAPAGPVYQAGTLSGNPLAMTAGIKTLEILSRPGSYEHLDRITGKLVQGLLDAAREFGHEVCGGHISGMFGLFFTAGPVTNYEQAKQSDLKKFAAFHRGMLEQGIYLAPSQFEAGFTSLAHTEADIERTIAAARTVLSQL</sequence>
<organism>
    <name type="scientific">Thermosynechococcus vestitus (strain NIES-2133 / IAM M-273 / BP-1)</name>
    <dbReference type="NCBI Taxonomy" id="197221"/>
    <lineage>
        <taxon>Bacteria</taxon>
        <taxon>Bacillati</taxon>
        <taxon>Cyanobacteriota</taxon>
        <taxon>Cyanophyceae</taxon>
        <taxon>Acaryochloridales</taxon>
        <taxon>Thermosynechococcaceae</taxon>
        <taxon>Thermosynechococcus</taxon>
    </lineage>
</organism>
<comment type="catalytic activity">
    <reaction evidence="1">
        <text>(S)-4-amino-5-oxopentanoate = 5-aminolevulinate</text>
        <dbReference type="Rhea" id="RHEA:14265"/>
        <dbReference type="ChEBI" id="CHEBI:57501"/>
        <dbReference type="ChEBI" id="CHEBI:356416"/>
        <dbReference type="EC" id="5.4.3.8"/>
    </reaction>
</comment>
<comment type="cofactor">
    <cofactor evidence="1">
        <name>pyridoxal 5'-phosphate</name>
        <dbReference type="ChEBI" id="CHEBI:597326"/>
    </cofactor>
</comment>
<comment type="pathway">
    <text evidence="1">Porphyrin-containing compound metabolism; protoporphyrin-IX biosynthesis; 5-aminolevulinate from L-glutamyl-tRNA(Glu): step 2/2.</text>
</comment>
<comment type="pathway">
    <text evidence="1">Porphyrin-containing compound metabolism; chlorophyll biosynthesis.</text>
</comment>
<comment type="subunit">
    <text evidence="1">Homodimer.</text>
</comment>
<comment type="subcellular location">
    <subcellularLocation>
        <location evidence="1">Cytoplasm</location>
    </subcellularLocation>
</comment>
<comment type="similarity">
    <text evidence="1">Belongs to the class-III pyridoxal-phosphate-dependent aminotransferase family. HemL subfamily.</text>
</comment>
<comment type="sequence caution" evidence="2">
    <conflict type="erroneous initiation">
        <sequence resource="EMBL-CDS" id="BAC08031"/>
    </conflict>
</comment>
<name>GSA_THEVB</name>
<evidence type="ECO:0000255" key="1">
    <source>
        <dbReference type="HAMAP-Rule" id="MF_00375"/>
    </source>
</evidence>
<evidence type="ECO:0000305" key="2"/>
<evidence type="ECO:0007829" key="3">
    <source>
        <dbReference type="PDB" id="2CFB"/>
    </source>
</evidence>
<dbReference type="EC" id="5.4.3.8" evidence="1"/>
<dbReference type="EMBL" id="BA000039">
    <property type="protein sequence ID" value="BAC08031.1"/>
    <property type="status" value="ALT_INIT"/>
    <property type="molecule type" value="Genomic_DNA"/>
</dbReference>
<dbReference type="RefSeq" id="NP_681269.2">
    <property type="nucleotide sequence ID" value="NC_004113.1"/>
</dbReference>
<dbReference type="PDB" id="2CFB">
    <property type="method" value="X-ray"/>
    <property type="resolution" value="2.85 A"/>
    <property type="chains" value="A=27-437"/>
</dbReference>
<dbReference type="PDBsum" id="2CFB"/>
<dbReference type="SMR" id="Q8DLK8"/>
<dbReference type="STRING" id="197221.gene:10747068"/>
<dbReference type="EnsemblBacteria" id="BAC08031">
    <property type="protein sequence ID" value="BAC08031"/>
    <property type="gene ID" value="BAC08031"/>
</dbReference>
<dbReference type="KEGG" id="tel:tlr0479"/>
<dbReference type="PATRIC" id="fig|197221.4.peg.504"/>
<dbReference type="eggNOG" id="COG0001">
    <property type="taxonomic scope" value="Bacteria"/>
</dbReference>
<dbReference type="UniPathway" id="UPA00251">
    <property type="reaction ID" value="UER00317"/>
</dbReference>
<dbReference type="UniPathway" id="UPA00668"/>
<dbReference type="EvolutionaryTrace" id="Q8DLK8"/>
<dbReference type="Proteomes" id="UP000000440">
    <property type="component" value="Chromosome"/>
</dbReference>
<dbReference type="GO" id="GO:0005737">
    <property type="term" value="C:cytoplasm"/>
    <property type="evidence" value="ECO:0007669"/>
    <property type="project" value="UniProtKB-SubCell"/>
</dbReference>
<dbReference type="GO" id="GO:0042286">
    <property type="term" value="F:glutamate-1-semialdehyde 2,1-aminomutase activity"/>
    <property type="evidence" value="ECO:0007669"/>
    <property type="project" value="UniProtKB-UniRule"/>
</dbReference>
<dbReference type="GO" id="GO:0030170">
    <property type="term" value="F:pyridoxal phosphate binding"/>
    <property type="evidence" value="ECO:0007669"/>
    <property type="project" value="InterPro"/>
</dbReference>
<dbReference type="GO" id="GO:0008483">
    <property type="term" value="F:transaminase activity"/>
    <property type="evidence" value="ECO:0007669"/>
    <property type="project" value="InterPro"/>
</dbReference>
<dbReference type="GO" id="GO:0015995">
    <property type="term" value="P:chlorophyll biosynthetic process"/>
    <property type="evidence" value="ECO:0007669"/>
    <property type="project" value="UniProtKB-UniRule"/>
</dbReference>
<dbReference type="GO" id="GO:0006782">
    <property type="term" value="P:protoporphyrinogen IX biosynthetic process"/>
    <property type="evidence" value="ECO:0007669"/>
    <property type="project" value="UniProtKB-UniRule"/>
</dbReference>
<dbReference type="CDD" id="cd00610">
    <property type="entry name" value="OAT_like"/>
    <property type="match status" value="1"/>
</dbReference>
<dbReference type="FunFam" id="3.40.640.10:FF:000021">
    <property type="entry name" value="Glutamate-1-semialdehyde 2,1-aminomutase"/>
    <property type="match status" value="1"/>
</dbReference>
<dbReference type="FunFam" id="3.90.1150.10:FF:000012">
    <property type="entry name" value="Glutamate-1-semialdehyde 2,1-aminomutase"/>
    <property type="match status" value="1"/>
</dbReference>
<dbReference type="Gene3D" id="3.90.1150.10">
    <property type="entry name" value="Aspartate Aminotransferase, domain 1"/>
    <property type="match status" value="1"/>
</dbReference>
<dbReference type="Gene3D" id="3.40.640.10">
    <property type="entry name" value="Type I PLP-dependent aspartate aminotransferase-like (Major domain)"/>
    <property type="match status" value="1"/>
</dbReference>
<dbReference type="HAMAP" id="MF_00375">
    <property type="entry name" value="HemL_aminotrans_3"/>
    <property type="match status" value="1"/>
</dbReference>
<dbReference type="InterPro" id="IPR004639">
    <property type="entry name" value="4pyrrol_synth_GluAld_NH2Trfase"/>
</dbReference>
<dbReference type="InterPro" id="IPR005814">
    <property type="entry name" value="Aminotrans_3"/>
</dbReference>
<dbReference type="InterPro" id="IPR049704">
    <property type="entry name" value="Aminotrans_3_PPA_site"/>
</dbReference>
<dbReference type="InterPro" id="IPR015424">
    <property type="entry name" value="PyrdxlP-dep_Trfase"/>
</dbReference>
<dbReference type="InterPro" id="IPR015421">
    <property type="entry name" value="PyrdxlP-dep_Trfase_major"/>
</dbReference>
<dbReference type="InterPro" id="IPR015422">
    <property type="entry name" value="PyrdxlP-dep_Trfase_small"/>
</dbReference>
<dbReference type="NCBIfam" id="TIGR00713">
    <property type="entry name" value="hemL"/>
    <property type="match status" value="1"/>
</dbReference>
<dbReference type="NCBIfam" id="NF000818">
    <property type="entry name" value="PRK00062.1"/>
    <property type="match status" value="1"/>
</dbReference>
<dbReference type="PANTHER" id="PTHR43713">
    <property type="entry name" value="GLUTAMATE-1-SEMIALDEHYDE 2,1-AMINOMUTASE"/>
    <property type="match status" value="1"/>
</dbReference>
<dbReference type="PANTHER" id="PTHR43713:SF3">
    <property type="entry name" value="GLUTAMATE-1-SEMIALDEHYDE 2,1-AMINOMUTASE 1, CHLOROPLASTIC-RELATED"/>
    <property type="match status" value="1"/>
</dbReference>
<dbReference type="Pfam" id="PF00202">
    <property type="entry name" value="Aminotran_3"/>
    <property type="match status" value="1"/>
</dbReference>
<dbReference type="SUPFAM" id="SSF53383">
    <property type="entry name" value="PLP-dependent transferases"/>
    <property type="match status" value="1"/>
</dbReference>
<dbReference type="PROSITE" id="PS00600">
    <property type="entry name" value="AA_TRANSFER_CLASS_3"/>
    <property type="match status" value="1"/>
</dbReference>
<reference key="1">
    <citation type="journal article" date="2002" name="DNA Res.">
        <title>Complete genome structure of the thermophilic cyanobacterium Thermosynechococcus elongatus BP-1.</title>
        <authorList>
            <person name="Nakamura Y."/>
            <person name="Kaneko T."/>
            <person name="Sato S."/>
            <person name="Ikeuchi M."/>
            <person name="Katoh H."/>
            <person name="Sasamoto S."/>
            <person name="Watanabe A."/>
            <person name="Iriguchi M."/>
            <person name="Kawashima K."/>
            <person name="Kimura T."/>
            <person name="Kishida Y."/>
            <person name="Kiyokawa C."/>
            <person name="Kohara M."/>
            <person name="Matsumoto M."/>
            <person name="Matsuno A."/>
            <person name="Nakazaki N."/>
            <person name="Shimpo S."/>
            <person name="Sugimoto M."/>
            <person name="Takeuchi C."/>
            <person name="Yamada M."/>
            <person name="Tabata S."/>
        </authorList>
    </citation>
    <scope>NUCLEOTIDE SEQUENCE [LARGE SCALE GENOMIC DNA]</scope>
    <source>
        <strain>NIES-2133 / IAM M-273 / BP-1</strain>
    </source>
</reference>
<proteinExistence type="evidence at protein level"/>
<keyword id="KW-0002">3D-structure</keyword>
<keyword id="KW-0149">Chlorophyll biosynthesis</keyword>
<keyword id="KW-0963">Cytoplasm</keyword>
<keyword id="KW-0413">Isomerase</keyword>
<keyword id="KW-0627">Porphyrin biosynthesis</keyword>
<keyword id="KW-0663">Pyridoxal phosphate</keyword>
<keyword id="KW-1185">Reference proteome</keyword>